<feature type="chain" id="PRO_0000231091" description="3-dehydroquinate synthase">
    <location>
        <begin position="1"/>
        <end position="362"/>
    </location>
</feature>
<feature type="binding site" evidence="1">
    <location>
        <begin position="70"/>
        <end position="75"/>
    </location>
    <ligand>
        <name>NAD(+)</name>
        <dbReference type="ChEBI" id="CHEBI:57540"/>
    </ligand>
</feature>
<feature type="binding site" evidence="1">
    <location>
        <begin position="104"/>
        <end position="108"/>
    </location>
    <ligand>
        <name>NAD(+)</name>
        <dbReference type="ChEBI" id="CHEBI:57540"/>
    </ligand>
</feature>
<feature type="binding site" evidence="1">
    <location>
        <begin position="128"/>
        <end position="129"/>
    </location>
    <ligand>
        <name>NAD(+)</name>
        <dbReference type="ChEBI" id="CHEBI:57540"/>
    </ligand>
</feature>
<feature type="binding site" evidence="1">
    <location>
        <position position="141"/>
    </location>
    <ligand>
        <name>NAD(+)</name>
        <dbReference type="ChEBI" id="CHEBI:57540"/>
    </ligand>
</feature>
<feature type="binding site" evidence="1">
    <location>
        <position position="150"/>
    </location>
    <ligand>
        <name>NAD(+)</name>
        <dbReference type="ChEBI" id="CHEBI:57540"/>
    </ligand>
</feature>
<feature type="binding site" evidence="1">
    <location>
        <begin position="168"/>
        <end position="171"/>
    </location>
    <ligand>
        <name>NAD(+)</name>
        <dbReference type="ChEBI" id="CHEBI:57540"/>
    </ligand>
</feature>
<feature type="binding site" evidence="1">
    <location>
        <position position="183"/>
    </location>
    <ligand>
        <name>Zn(2+)</name>
        <dbReference type="ChEBI" id="CHEBI:29105"/>
    </ligand>
</feature>
<feature type="binding site" evidence="1">
    <location>
        <position position="246"/>
    </location>
    <ligand>
        <name>Zn(2+)</name>
        <dbReference type="ChEBI" id="CHEBI:29105"/>
    </ligand>
</feature>
<feature type="binding site" evidence="1">
    <location>
        <position position="263"/>
    </location>
    <ligand>
        <name>Zn(2+)</name>
        <dbReference type="ChEBI" id="CHEBI:29105"/>
    </ligand>
</feature>
<reference key="1">
    <citation type="journal article" date="2005" name="J. Bacteriol.">
        <title>Genomic sequence of an otitis media isolate of nontypeable Haemophilus influenzae: comparative study with H. influenzae serotype d, strain KW20.</title>
        <authorList>
            <person name="Harrison A."/>
            <person name="Dyer D.W."/>
            <person name="Gillaspy A."/>
            <person name="Ray W.C."/>
            <person name="Mungur R."/>
            <person name="Carson M.B."/>
            <person name="Zhong H."/>
            <person name="Gipson J."/>
            <person name="Gipson M."/>
            <person name="Johnson L.S."/>
            <person name="Lewis L."/>
            <person name="Bakaletz L.O."/>
            <person name="Munson R.S. Jr."/>
        </authorList>
    </citation>
    <scope>NUCLEOTIDE SEQUENCE [LARGE SCALE GENOMIC DNA]</scope>
    <source>
        <strain>86-028NP</strain>
    </source>
</reference>
<keyword id="KW-0028">Amino-acid biosynthesis</keyword>
<keyword id="KW-0057">Aromatic amino acid biosynthesis</keyword>
<keyword id="KW-0170">Cobalt</keyword>
<keyword id="KW-0963">Cytoplasm</keyword>
<keyword id="KW-0456">Lyase</keyword>
<keyword id="KW-0479">Metal-binding</keyword>
<keyword id="KW-0520">NAD</keyword>
<keyword id="KW-0547">Nucleotide-binding</keyword>
<keyword id="KW-0862">Zinc</keyword>
<protein>
    <recommendedName>
        <fullName evidence="1">3-dehydroquinate synthase</fullName>
        <shortName evidence="1">DHQS</shortName>
        <ecNumber evidence="1">4.2.3.4</ecNumber>
    </recommendedName>
</protein>
<proteinExistence type="inferred from homology"/>
<comment type="function">
    <text evidence="1">Catalyzes the conversion of 3-deoxy-D-arabino-heptulosonate 7-phosphate (DAHP) to dehydroquinate (DHQ).</text>
</comment>
<comment type="catalytic activity">
    <reaction evidence="1">
        <text>7-phospho-2-dehydro-3-deoxy-D-arabino-heptonate = 3-dehydroquinate + phosphate</text>
        <dbReference type="Rhea" id="RHEA:21968"/>
        <dbReference type="ChEBI" id="CHEBI:32364"/>
        <dbReference type="ChEBI" id="CHEBI:43474"/>
        <dbReference type="ChEBI" id="CHEBI:58394"/>
        <dbReference type="EC" id="4.2.3.4"/>
    </reaction>
</comment>
<comment type="cofactor">
    <cofactor evidence="1">
        <name>Co(2+)</name>
        <dbReference type="ChEBI" id="CHEBI:48828"/>
    </cofactor>
    <cofactor evidence="1">
        <name>Zn(2+)</name>
        <dbReference type="ChEBI" id="CHEBI:29105"/>
    </cofactor>
    <text evidence="1">Binds 1 divalent metal cation per subunit. Can use either Co(2+) or Zn(2+).</text>
</comment>
<comment type="cofactor">
    <cofactor evidence="1">
        <name>NAD(+)</name>
        <dbReference type="ChEBI" id="CHEBI:57540"/>
    </cofactor>
</comment>
<comment type="pathway">
    <text evidence="1">Metabolic intermediate biosynthesis; chorismate biosynthesis; chorismate from D-erythrose 4-phosphate and phosphoenolpyruvate: step 2/7.</text>
</comment>
<comment type="subcellular location">
    <subcellularLocation>
        <location evidence="1">Cytoplasm</location>
    </subcellularLocation>
</comment>
<comment type="similarity">
    <text evidence="1">Belongs to the sugar phosphate cyclases superfamily. Dehydroquinate synthase family.</text>
</comment>
<dbReference type="EC" id="4.2.3.4" evidence="1"/>
<dbReference type="EMBL" id="CP000057">
    <property type="protein sequence ID" value="AAX87265.1"/>
    <property type="molecule type" value="Genomic_DNA"/>
</dbReference>
<dbReference type="RefSeq" id="WP_005688099.1">
    <property type="nucleotide sequence ID" value="NC_007146.2"/>
</dbReference>
<dbReference type="SMR" id="Q4QNY2"/>
<dbReference type="GeneID" id="93219144"/>
<dbReference type="KEGG" id="hit:NTHI0306"/>
<dbReference type="HOGENOM" id="CLU_001201_0_2_6"/>
<dbReference type="UniPathway" id="UPA00053">
    <property type="reaction ID" value="UER00085"/>
</dbReference>
<dbReference type="Proteomes" id="UP000002525">
    <property type="component" value="Chromosome"/>
</dbReference>
<dbReference type="GO" id="GO:0005737">
    <property type="term" value="C:cytoplasm"/>
    <property type="evidence" value="ECO:0007669"/>
    <property type="project" value="UniProtKB-SubCell"/>
</dbReference>
<dbReference type="GO" id="GO:0003856">
    <property type="term" value="F:3-dehydroquinate synthase activity"/>
    <property type="evidence" value="ECO:0007669"/>
    <property type="project" value="UniProtKB-UniRule"/>
</dbReference>
<dbReference type="GO" id="GO:0046872">
    <property type="term" value="F:metal ion binding"/>
    <property type="evidence" value="ECO:0007669"/>
    <property type="project" value="UniProtKB-KW"/>
</dbReference>
<dbReference type="GO" id="GO:0000166">
    <property type="term" value="F:nucleotide binding"/>
    <property type="evidence" value="ECO:0007669"/>
    <property type="project" value="UniProtKB-KW"/>
</dbReference>
<dbReference type="GO" id="GO:0008652">
    <property type="term" value="P:amino acid biosynthetic process"/>
    <property type="evidence" value="ECO:0007669"/>
    <property type="project" value="UniProtKB-KW"/>
</dbReference>
<dbReference type="GO" id="GO:0009073">
    <property type="term" value="P:aromatic amino acid family biosynthetic process"/>
    <property type="evidence" value="ECO:0007669"/>
    <property type="project" value="UniProtKB-KW"/>
</dbReference>
<dbReference type="GO" id="GO:0009423">
    <property type="term" value="P:chorismate biosynthetic process"/>
    <property type="evidence" value="ECO:0007669"/>
    <property type="project" value="UniProtKB-UniRule"/>
</dbReference>
<dbReference type="CDD" id="cd08195">
    <property type="entry name" value="DHQS"/>
    <property type="match status" value="1"/>
</dbReference>
<dbReference type="FunFam" id="1.20.1090.10:FF:000002">
    <property type="entry name" value="3-dehydroquinate synthase"/>
    <property type="match status" value="1"/>
</dbReference>
<dbReference type="FunFam" id="3.40.50.1970:FF:000031">
    <property type="entry name" value="3-dehydroquinate synthase"/>
    <property type="match status" value="1"/>
</dbReference>
<dbReference type="Gene3D" id="3.40.50.1970">
    <property type="match status" value="1"/>
</dbReference>
<dbReference type="Gene3D" id="1.20.1090.10">
    <property type="entry name" value="Dehydroquinate synthase-like - alpha domain"/>
    <property type="match status" value="1"/>
</dbReference>
<dbReference type="HAMAP" id="MF_00110">
    <property type="entry name" value="DHQ_synthase"/>
    <property type="match status" value="1"/>
</dbReference>
<dbReference type="InterPro" id="IPR050071">
    <property type="entry name" value="Dehydroquinate_synthase"/>
</dbReference>
<dbReference type="InterPro" id="IPR016037">
    <property type="entry name" value="DHQ_synth_AroB"/>
</dbReference>
<dbReference type="InterPro" id="IPR030963">
    <property type="entry name" value="DHQ_synth_fam"/>
</dbReference>
<dbReference type="InterPro" id="IPR030960">
    <property type="entry name" value="DHQS/DOIS_N"/>
</dbReference>
<dbReference type="InterPro" id="IPR056179">
    <property type="entry name" value="DHQS_C"/>
</dbReference>
<dbReference type="NCBIfam" id="TIGR01357">
    <property type="entry name" value="aroB"/>
    <property type="match status" value="1"/>
</dbReference>
<dbReference type="PANTHER" id="PTHR43622">
    <property type="entry name" value="3-DEHYDROQUINATE SYNTHASE"/>
    <property type="match status" value="1"/>
</dbReference>
<dbReference type="PANTHER" id="PTHR43622:SF7">
    <property type="entry name" value="3-DEHYDROQUINATE SYNTHASE, CHLOROPLASTIC"/>
    <property type="match status" value="1"/>
</dbReference>
<dbReference type="Pfam" id="PF01761">
    <property type="entry name" value="DHQ_synthase"/>
    <property type="match status" value="1"/>
</dbReference>
<dbReference type="Pfam" id="PF24621">
    <property type="entry name" value="DHQS_C"/>
    <property type="match status" value="1"/>
</dbReference>
<dbReference type="PIRSF" id="PIRSF001455">
    <property type="entry name" value="DHQ_synth"/>
    <property type="match status" value="1"/>
</dbReference>
<dbReference type="SUPFAM" id="SSF56796">
    <property type="entry name" value="Dehydroquinate synthase-like"/>
    <property type="match status" value="1"/>
</dbReference>
<organism>
    <name type="scientific">Haemophilus influenzae (strain 86-028NP)</name>
    <dbReference type="NCBI Taxonomy" id="281310"/>
    <lineage>
        <taxon>Bacteria</taxon>
        <taxon>Pseudomonadati</taxon>
        <taxon>Pseudomonadota</taxon>
        <taxon>Gammaproteobacteria</taxon>
        <taxon>Pasteurellales</taxon>
        <taxon>Pasteurellaceae</taxon>
        <taxon>Haemophilus</taxon>
    </lineage>
</organism>
<sequence length="362" mass="40037">MLCVNVELQERRYPILIGSGLLQDERSYPIKRGDRVMIVTNPTVAQFYLDTVIYALEKRGCVVDHVLLPDGEKYKTLESLNLIFTALLQDNHGRDTTIIALGGGVIGDVAGFVAASYQRGVRLIQMPTTLLSQVDSSVGGKTAVNHELGKNMIGAFYQPSMVIIDTLTLNTLPKREVNAGLAEVIKYGAILDYEFFEWLEQHIDELVALHPEALQHCISRCCQIKADVVARDETEKGDRALLNLGHTFGHAIETHLGYGNWLHGEAVSTGMMMAAVLSEELGDISIADVSRLEKLLARANLPTVSPDTMQPEDYLPHMMRDKKVLSGKLRLVLLKSLGQAYVANDTDHTLVLNAIRRCTQTD</sequence>
<name>AROB_HAEI8</name>
<evidence type="ECO:0000255" key="1">
    <source>
        <dbReference type="HAMAP-Rule" id="MF_00110"/>
    </source>
</evidence>
<gene>
    <name evidence="1" type="primary">aroB</name>
    <name type="ordered locus">NTHI0306</name>
</gene>
<accession>Q4QNY2</accession>